<evidence type="ECO:0000255" key="1">
    <source>
        <dbReference type="HAMAP-Rule" id="MF_00328"/>
    </source>
</evidence>
<evidence type="ECO:0007829" key="2">
    <source>
        <dbReference type="PDB" id="3LNC"/>
    </source>
</evidence>
<organism>
    <name type="scientific">Anaplasma phagocytophilum (strain HZ)</name>
    <dbReference type="NCBI Taxonomy" id="212042"/>
    <lineage>
        <taxon>Bacteria</taxon>
        <taxon>Pseudomonadati</taxon>
        <taxon>Pseudomonadota</taxon>
        <taxon>Alphaproteobacteria</taxon>
        <taxon>Rickettsiales</taxon>
        <taxon>Anaplasmataceae</taxon>
        <taxon>Anaplasma</taxon>
        <taxon>phagocytophilum group</taxon>
    </lineage>
</organism>
<keyword id="KW-0002">3D-structure</keyword>
<keyword id="KW-0067">ATP-binding</keyword>
<keyword id="KW-0963">Cytoplasm</keyword>
<keyword id="KW-0418">Kinase</keyword>
<keyword id="KW-0547">Nucleotide-binding</keyword>
<keyword id="KW-0808">Transferase</keyword>
<accession>Q2GLF7</accession>
<protein>
    <recommendedName>
        <fullName evidence="1">Guanylate kinase</fullName>
        <ecNumber evidence="1">2.7.4.8</ecNumber>
    </recommendedName>
    <alternativeName>
        <fullName evidence="1">GMP kinase</fullName>
    </alternativeName>
</protein>
<feature type="chain" id="PRO_0000266285" description="Guanylate kinase">
    <location>
        <begin position="1"/>
        <end position="210"/>
    </location>
</feature>
<feature type="domain" description="Guanylate kinase-like" evidence="1">
    <location>
        <begin position="6"/>
        <end position="186"/>
    </location>
</feature>
<feature type="binding site" evidence="1">
    <location>
        <begin position="13"/>
        <end position="20"/>
    </location>
    <ligand>
        <name>ATP</name>
        <dbReference type="ChEBI" id="CHEBI:30616"/>
    </ligand>
</feature>
<feature type="strand" evidence="2">
    <location>
        <begin position="8"/>
        <end position="12"/>
    </location>
</feature>
<feature type="helix" evidence="2">
    <location>
        <begin position="22"/>
        <end position="27"/>
    </location>
</feature>
<feature type="strand" evidence="2">
    <location>
        <begin position="34"/>
        <end position="36"/>
    </location>
</feature>
<feature type="strand" evidence="2">
    <location>
        <begin position="40"/>
        <end position="43"/>
    </location>
</feature>
<feature type="turn" evidence="2">
    <location>
        <begin position="51"/>
        <end position="53"/>
    </location>
</feature>
<feature type="helix" evidence="2">
    <location>
        <begin position="60"/>
        <end position="68"/>
    </location>
</feature>
<feature type="strand" evidence="2">
    <location>
        <begin position="72"/>
        <end position="78"/>
    </location>
</feature>
<feature type="strand" evidence="2">
    <location>
        <begin position="81"/>
        <end position="86"/>
    </location>
</feature>
<feature type="helix" evidence="2">
    <location>
        <begin position="90"/>
        <end position="96"/>
    </location>
</feature>
<feature type="strand" evidence="2">
    <location>
        <begin position="99"/>
        <end position="103"/>
    </location>
</feature>
<feature type="helix" evidence="2">
    <location>
        <begin position="106"/>
        <end position="115"/>
    </location>
</feature>
<feature type="helix" evidence="2">
    <location>
        <begin position="117"/>
        <end position="119"/>
    </location>
</feature>
<feature type="strand" evidence="2">
    <location>
        <begin position="120"/>
        <end position="126"/>
    </location>
</feature>
<feature type="helix" evidence="2">
    <location>
        <begin position="130"/>
        <end position="135"/>
    </location>
</feature>
<feature type="helix" evidence="2">
    <location>
        <begin position="152"/>
        <end position="159"/>
    </location>
</feature>
<feature type="helix" evidence="2">
    <location>
        <begin position="160"/>
        <end position="164"/>
    </location>
</feature>
<feature type="strand" evidence="2">
    <location>
        <begin position="165"/>
        <end position="170"/>
    </location>
</feature>
<feature type="helix" evidence="2">
    <location>
        <begin position="174"/>
        <end position="189"/>
    </location>
</feature>
<feature type="helix" evidence="2">
    <location>
        <begin position="192"/>
        <end position="194"/>
    </location>
</feature>
<feature type="strand" evidence="2">
    <location>
        <begin position="195"/>
        <end position="197"/>
    </location>
</feature>
<feature type="helix" evidence="2">
    <location>
        <begin position="198"/>
        <end position="205"/>
    </location>
</feature>
<gene>
    <name evidence="1" type="primary">gmk</name>
    <name type="ordered locus">APH_0170</name>
</gene>
<comment type="function">
    <text evidence="1">Essential for recycling GMP and indirectly, cGMP.</text>
</comment>
<comment type="catalytic activity">
    <reaction evidence="1">
        <text>GMP + ATP = GDP + ADP</text>
        <dbReference type="Rhea" id="RHEA:20780"/>
        <dbReference type="ChEBI" id="CHEBI:30616"/>
        <dbReference type="ChEBI" id="CHEBI:58115"/>
        <dbReference type="ChEBI" id="CHEBI:58189"/>
        <dbReference type="ChEBI" id="CHEBI:456216"/>
        <dbReference type="EC" id="2.7.4.8"/>
    </reaction>
</comment>
<comment type="subcellular location">
    <subcellularLocation>
        <location evidence="1">Cytoplasm</location>
    </subcellularLocation>
</comment>
<comment type="similarity">
    <text evidence="1">Belongs to the guanylate kinase family.</text>
</comment>
<dbReference type="EC" id="2.7.4.8" evidence="1"/>
<dbReference type="EMBL" id="CP000235">
    <property type="protein sequence ID" value="ABD43557.1"/>
    <property type="molecule type" value="Genomic_DNA"/>
</dbReference>
<dbReference type="RefSeq" id="WP_011450318.1">
    <property type="nucleotide sequence ID" value="NC_007797.1"/>
</dbReference>
<dbReference type="PDB" id="3LNC">
    <property type="method" value="X-ray"/>
    <property type="resolution" value="1.95 A"/>
    <property type="chains" value="A/B=1-210"/>
</dbReference>
<dbReference type="PDBsum" id="3LNC"/>
<dbReference type="SMR" id="Q2GLF7"/>
<dbReference type="STRING" id="212042.APH_0170"/>
<dbReference type="PaxDb" id="212042-APH_0170"/>
<dbReference type="EnsemblBacteria" id="ABD43557">
    <property type="protein sequence ID" value="ABD43557"/>
    <property type="gene ID" value="APH_0170"/>
</dbReference>
<dbReference type="GeneID" id="92747601"/>
<dbReference type="KEGG" id="aph:APH_0170"/>
<dbReference type="eggNOG" id="COG0194">
    <property type="taxonomic scope" value="Bacteria"/>
</dbReference>
<dbReference type="HOGENOM" id="CLU_001715_1_2_5"/>
<dbReference type="EvolutionaryTrace" id="Q2GLF7"/>
<dbReference type="Proteomes" id="UP000001943">
    <property type="component" value="Chromosome"/>
</dbReference>
<dbReference type="GO" id="GO:0005829">
    <property type="term" value="C:cytosol"/>
    <property type="evidence" value="ECO:0007669"/>
    <property type="project" value="TreeGrafter"/>
</dbReference>
<dbReference type="GO" id="GO:0005524">
    <property type="term" value="F:ATP binding"/>
    <property type="evidence" value="ECO:0007669"/>
    <property type="project" value="UniProtKB-UniRule"/>
</dbReference>
<dbReference type="GO" id="GO:0004385">
    <property type="term" value="F:guanylate kinase activity"/>
    <property type="evidence" value="ECO:0007669"/>
    <property type="project" value="UniProtKB-UniRule"/>
</dbReference>
<dbReference type="CDD" id="cd00071">
    <property type="entry name" value="GMPK"/>
    <property type="match status" value="1"/>
</dbReference>
<dbReference type="FunFam" id="3.30.63.10:FF:000002">
    <property type="entry name" value="Guanylate kinase 1"/>
    <property type="match status" value="1"/>
</dbReference>
<dbReference type="Gene3D" id="3.30.63.10">
    <property type="entry name" value="Guanylate Kinase phosphate binding domain"/>
    <property type="match status" value="1"/>
</dbReference>
<dbReference type="Gene3D" id="3.40.50.300">
    <property type="entry name" value="P-loop containing nucleotide triphosphate hydrolases"/>
    <property type="match status" value="1"/>
</dbReference>
<dbReference type="HAMAP" id="MF_00328">
    <property type="entry name" value="Guanylate_kinase"/>
    <property type="match status" value="1"/>
</dbReference>
<dbReference type="InterPro" id="IPR008145">
    <property type="entry name" value="GK/Ca_channel_bsu"/>
</dbReference>
<dbReference type="InterPro" id="IPR008144">
    <property type="entry name" value="Guanylate_kin-like_dom"/>
</dbReference>
<dbReference type="InterPro" id="IPR017665">
    <property type="entry name" value="Guanylate_kinase"/>
</dbReference>
<dbReference type="InterPro" id="IPR020590">
    <property type="entry name" value="Guanylate_kinase_CS"/>
</dbReference>
<dbReference type="InterPro" id="IPR027417">
    <property type="entry name" value="P-loop_NTPase"/>
</dbReference>
<dbReference type="NCBIfam" id="TIGR03263">
    <property type="entry name" value="guanyl_kin"/>
    <property type="match status" value="1"/>
</dbReference>
<dbReference type="PANTHER" id="PTHR23117:SF13">
    <property type="entry name" value="GUANYLATE KINASE"/>
    <property type="match status" value="1"/>
</dbReference>
<dbReference type="PANTHER" id="PTHR23117">
    <property type="entry name" value="GUANYLATE KINASE-RELATED"/>
    <property type="match status" value="1"/>
</dbReference>
<dbReference type="Pfam" id="PF00625">
    <property type="entry name" value="Guanylate_kin"/>
    <property type="match status" value="1"/>
</dbReference>
<dbReference type="SMART" id="SM00072">
    <property type="entry name" value="GuKc"/>
    <property type="match status" value="1"/>
</dbReference>
<dbReference type="SUPFAM" id="SSF52540">
    <property type="entry name" value="P-loop containing nucleoside triphosphate hydrolases"/>
    <property type="match status" value="1"/>
</dbReference>
<dbReference type="PROSITE" id="PS00856">
    <property type="entry name" value="GUANYLATE_KINASE_1"/>
    <property type="match status" value="1"/>
</dbReference>
<dbReference type="PROSITE" id="PS50052">
    <property type="entry name" value="GUANYLATE_KINASE_2"/>
    <property type="match status" value="1"/>
</dbReference>
<proteinExistence type="evidence at protein level"/>
<sequence length="210" mass="23928">MLKSVGVILVLSSPSGCGKTTVANKLLEKQKNNIVKSVSVTTRAARKGEKEGKDYYFVDREEFLRLCSNGEIIEHAEVFGNFYGVPRKNLEDNVDKGVSTLLVIDWQGAFKFMEMMREHVVSIFIMPPSMEELRRRLCGRRADDSEVVEARLKGAAFEISHCEAYDYVIVNEDIEETADRISNILRAEQMKTCRQVGLRELLESRFPIED</sequence>
<reference key="1">
    <citation type="journal article" date="2006" name="PLoS Genet.">
        <title>Comparative genomics of emerging human ehrlichiosis agents.</title>
        <authorList>
            <person name="Dunning Hotopp J.C."/>
            <person name="Lin M."/>
            <person name="Madupu R."/>
            <person name="Crabtree J."/>
            <person name="Angiuoli S.V."/>
            <person name="Eisen J.A."/>
            <person name="Seshadri R."/>
            <person name="Ren Q."/>
            <person name="Wu M."/>
            <person name="Utterback T.R."/>
            <person name="Smith S."/>
            <person name="Lewis M."/>
            <person name="Khouri H."/>
            <person name="Zhang C."/>
            <person name="Niu H."/>
            <person name="Lin Q."/>
            <person name="Ohashi N."/>
            <person name="Zhi N."/>
            <person name="Nelson W.C."/>
            <person name="Brinkac L.M."/>
            <person name="Dodson R.J."/>
            <person name="Rosovitz M.J."/>
            <person name="Sundaram J.P."/>
            <person name="Daugherty S.C."/>
            <person name="Davidsen T."/>
            <person name="Durkin A.S."/>
            <person name="Gwinn M.L."/>
            <person name="Haft D.H."/>
            <person name="Selengut J.D."/>
            <person name="Sullivan S.A."/>
            <person name="Zafar N."/>
            <person name="Zhou L."/>
            <person name="Benahmed F."/>
            <person name="Forberger H."/>
            <person name="Halpin R."/>
            <person name="Mulligan S."/>
            <person name="Robinson J."/>
            <person name="White O."/>
            <person name="Rikihisa Y."/>
            <person name="Tettelin H."/>
        </authorList>
    </citation>
    <scope>NUCLEOTIDE SEQUENCE [LARGE SCALE GENOMIC DNA]</scope>
    <source>
        <strain>HZ</strain>
    </source>
</reference>
<name>KGUA_ANAPZ</name>